<dbReference type="EC" id="4.2.3.-" evidence="6"/>
<dbReference type="EMBL" id="AB725916">
    <property type="protein sequence ID" value="BAM84047.1"/>
    <property type="molecule type" value="Genomic_DNA"/>
</dbReference>
<dbReference type="GO" id="GO:0016020">
    <property type="term" value="C:membrane"/>
    <property type="evidence" value="ECO:0007669"/>
    <property type="project" value="UniProtKB-SubCell"/>
</dbReference>
<dbReference type="GO" id="GO:0016829">
    <property type="term" value="F:lyase activity"/>
    <property type="evidence" value="ECO:0007669"/>
    <property type="project" value="UniProtKB-KW"/>
</dbReference>
<dbReference type="InterPro" id="IPR039020">
    <property type="entry name" value="PaxB-like"/>
</dbReference>
<dbReference type="PANTHER" id="PTHR42038">
    <property type="match status" value="1"/>
</dbReference>
<dbReference type="PANTHER" id="PTHR42038:SF2">
    <property type="entry name" value="TERPENE CYCLASE AUSL"/>
    <property type="match status" value="1"/>
</dbReference>
<dbReference type="Pfam" id="PF25129">
    <property type="entry name" value="Pyr4-TMTC"/>
    <property type="match status" value="1"/>
</dbReference>
<keyword id="KW-0325">Glycoprotein</keyword>
<keyword id="KW-0456">Lyase</keyword>
<keyword id="KW-0472">Membrane</keyword>
<keyword id="KW-0812">Transmembrane</keyword>
<keyword id="KW-1133">Transmembrane helix</keyword>
<comment type="function">
    <text evidence="3 6">Terpene cyclase; part of the gene cluster that mediates the biosynthesis of terpendoles, indole-diterpene (IDT) mycotoxins including terpendole I, terpendole K, terpendole C, as well as the kinesin Eg5 inhibitor terpendole E (PubMed:23261604). Terpendoles biosynthesis begins with the synthesis of geranylgeranyl diphosphate (GGPP) by a yet unidentified GGPP synthase. Condensation of indole-3-glycerol phosphate with GGPP by the prenyltransferase terC then forms 3-geranylgeranylindole (3-GGI), followed by epoxidation and cyclization of this intermediate (by the FAD-dependent monooxygeanse terM and the terpene cyclase terB) to form paspaline. The cytochrome monooxygenase terQ then hydroxylates paspalline at C-11 to yield terpendole E. The cytochrome monooxygenase terP converts terpendole E to 13-desoxyterpendole I, and terQ converts 13-desoxyterpendole I into terpendole I. TerF and terK are required for conversion of terpendole I to terpendole C which is further converted to terpendole K (Probable).</text>
</comment>
<comment type="pathway">
    <text evidence="3">Secondary metabolite biosynthesis.</text>
</comment>
<comment type="subcellular location">
    <subcellularLocation>
        <location evidence="1">Membrane</location>
        <topology evidence="1">Multi-pass membrane protein</topology>
    </subcellularLocation>
</comment>
<comment type="disruption phenotype">
    <text evidence="3">The disruption of the whole terpendoles biosynthesis cluster abolishes the terpendoles production.</text>
</comment>
<comment type="similarity">
    <text evidence="5">Belongs to the paxB family.</text>
</comment>
<gene>
    <name evidence="4" type="primary">terB</name>
</gene>
<accession>M1VJS5</accession>
<reference key="1">
    <citation type="journal article" date="2012" name="Chem. Biol.">
        <title>Terpendole E, a kinesin Eg5 inhibitor, is a key biosynthetic intermediate of indole-diterpenes in the producing fungus Chaunopycnis alba.</title>
        <authorList>
            <person name="Motoyama T."/>
            <person name="Hayashi T."/>
            <person name="Hirota H."/>
            <person name="Ueki M."/>
            <person name="Osada H."/>
        </authorList>
    </citation>
    <scope>NUCLEOTIDE SEQUENCE [GENOMIC DNA]</scope>
    <scope>FUNCTION</scope>
    <scope>DISRUPTION PHENOTYPE</scope>
    <scope>PATHWAY</scope>
    <source>
        <strain>RK99-F33</strain>
    </source>
</reference>
<protein>
    <recommendedName>
        <fullName evidence="4">Terpene cyclase terB</fullName>
        <ecNumber evidence="6">4.2.3.-</ecNumber>
    </recommendedName>
    <alternativeName>
        <fullName evidence="4">Terpendoles biosynthesis cluster protein B</fullName>
    </alternativeName>
</protein>
<organism>
    <name type="scientific">Tolypocladium album</name>
    <name type="common">Soil fungus</name>
    <name type="synonym">Chaunopycnis alba</name>
    <dbReference type="NCBI Taxonomy" id="124418"/>
    <lineage>
        <taxon>Eukaryota</taxon>
        <taxon>Fungi</taxon>
        <taxon>Dikarya</taxon>
        <taxon>Ascomycota</taxon>
        <taxon>Pezizomycotina</taxon>
        <taxon>Sordariomycetes</taxon>
        <taxon>Hypocreomycetidae</taxon>
        <taxon>Hypocreales</taxon>
        <taxon>Ophiocordycipitaceae</taxon>
        <taxon>Tolypocladium</taxon>
    </lineage>
</organism>
<proteinExistence type="inferred from homology"/>
<evidence type="ECO:0000255" key="1"/>
<evidence type="ECO:0000255" key="2">
    <source>
        <dbReference type="PROSITE-ProRule" id="PRU00498"/>
    </source>
</evidence>
<evidence type="ECO:0000269" key="3">
    <source>
    </source>
</evidence>
<evidence type="ECO:0000303" key="4">
    <source>
    </source>
</evidence>
<evidence type="ECO:0000305" key="5"/>
<evidence type="ECO:0000305" key="6">
    <source>
    </source>
</evidence>
<sequence>MDGFTDSQAPPAYEEVKWLADTLVAFMGIGWLINYGAMIRHSYQGRTYCMGIIPLCNNIGWELVYTLVHPSSNRVELAVFAAGVTLNVIIMFAATRSAKTEWQHSPLVANHTPLIFLGGTFVCFAGHVALAAEIGPALAYSWGAVICQLVLSIGGVCQLLQRNTTRGTSVTLWLSRFLGSCCTVGFAFLRWRYWPEAFAWLAGPLVLWSLATFVLADITYGVCLYLISQTETSSTKRSKLK</sequence>
<name>TERB_TOLAL</name>
<feature type="chain" id="PRO_0000460261" description="Terpene cyclase terB">
    <location>
        <begin position="1"/>
        <end position="241"/>
    </location>
</feature>
<feature type="transmembrane region" description="Helical" evidence="1">
    <location>
        <begin position="19"/>
        <end position="39"/>
    </location>
</feature>
<feature type="transmembrane region" description="Helical" evidence="1">
    <location>
        <begin position="48"/>
        <end position="68"/>
    </location>
</feature>
<feature type="transmembrane region" description="Helical" evidence="1">
    <location>
        <begin position="75"/>
        <end position="95"/>
    </location>
</feature>
<feature type="transmembrane region" description="Helical" evidence="1">
    <location>
        <begin position="114"/>
        <end position="134"/>
    </location>
</feature>
<feature type="transmembrane region" description="Helical" evidence="1">
    <location>
        <begin position="137"/>
        <end position="157"/>
    </location>
</feature>
<feature type="transmembrane region" description="Helical" evidence="1">
    <location>
        <begin position="169"/>
        <end position="189"/>
    </location>
</feature>
<feature type="transmembrane region" description="Helical" evidence="1">
    <location>
        <begin position="198"/>
        <end position="218"/>
    </location>
</feature>
<feature type="glycosylation site" description="N-linked (GlcNAc...) asparagine" evidence="2">
    <location>
        <position position="163"/>
    </location>
</feature>